<protein>
    <recommendedName>
        <fullName evidence="1">L-lactate dehydrogenase</fullName>
        <ecNumber evidence="1">1.1.-.-</ecNumber>
    </recommendedName>
</protein>
<reference key="1">
    <citation type="journal article" date="2006" name="J. Bacteriol.">
        <title>Complete genome sequence of Yersinia pestis strains Antiqua and Nepal516: evidence of gene reduction in an emerging pathogen.</title>
        <authorList>
            <person name="Chain P.S.G."/>
            <person name="Hu P."/>
            <person name="Malfatti S.A."/>
            <person name="Radnedge L."/>
            <person name="Larimer F."/>
            <person name="Vergez L.M."/>
            <person name="Worsham P."/>
            <person name="Chu M.C."/>
            <person name="Andersen G.L."/>
        </authorList>
    </citation>
    <scope>NUCLEOTIDE SEQUENCE [LARGE SCALE GENOMIC DNA]</scope>
    <source>
        <strain>Antiqua</strain>
    </source>
</reference>
<accession>Q1C9P0</accession>
<proteinExistence type="inferred from homology"/>
<feature type="chain" id="PRO_1000068997" description="L-lactate dehydrogenase">
    <location>
        <begin position="1"/>
        <end position="381"/>
    </location>
</feature>
<feature type="domain" description="FMN hydroxy acid dehydrogenase" evidence="1">
    <location>
        <begin position="1"/>
        <end position="380"/>
    </location>
</feature>
<feature type="active site" description="Proton acceptor" evidence="1">
    <location>
        <position position="275"/>
    </location>
</feature>
<feature type="binding site" evidence="1">
    <location>
        <position position="24"/>
    </location>
    <ligand>
        <name>substrate</name>
    </ligand>
</feature>
<feature type="binding site" evidence="1">
    <location>
        <position position="106"/>
    </location>
    <ligand>
        <name>FMN</name>
        <dbReference type="ChEBI" id="CHEBI:58210"/>
    </ligand>
</feature>
<feature type="binding site" evidence="1">
    <location>
        <position position="127"/>
    </location>
    <ligand>
        <name>FMN</name>
        <dbReference type="ChEBI" id="CHEBI:58210"/>
    </ligand>
</feature>
<feature type="binding site" evidence="1">
    <location>
        <position position="129"/>
    </location>
    <ligand>
        <name>substrate</name>
    </ligand>
</feature>
<feature type="binding site" evidence="1">
    <location>
        <position position="155"/>
    </location>
    <ligand>
        <name>FMN</name>
        <dbReference type="ChEBI" id="CHEBI:58210"/>
    </ligand>
</feature>
<feature type="binding site" evidence="1">
    <location>
        <position position="164"/>
    </location>
    <ligand>
        <name>substrate</name>
    </ligand>
</feature>
<feature type="binding site" evidence="1">
    <location>
        <position position="251"/>
    </location>
    <ligand>
        <name>FMN</name>
        <dbReference type="ChEBI" id="CHEBI:58210"/>
    </ligand>
</feature>
<feature type="binding site" evidence="1">
    <location>
        <position position="278"/>
    </location>
    <ligand>
        <name>substrate</name>
    </ligand>
</feature>
<feature type="binding site" evidence="1">
    <location>
        <begin position="306"/>
        <end position="330"/>
    </location>
    <ligand>
        <name>FMN</name>
        <dbReference type="ChEBI" id="CHEBI:58210"/>
    </ligand>
</feature>
<gene>
    <name evidence="1" type="primary">lldD</name>
    <name type="ordered locus">YPA_0864</name>
</gene>
<name>LLDD_YERPA</name>
<comment type="function">
    <text evidence="1">Catalyzes the conversion of L-lactate to pyruvate. Is coupled to the respiratory chain.</text>
</comment>
<comment type="catalytic activity">
    <reaction evidence="1">
        <text>(S)-lactate + A = pyruvate + AH2</text>
        <dbReference type="Rhea" id="RHEA:45816"/>
        <dbReference type="ChEBI" id="CHEBI:13193"/>
        <dbReference type="ChEBI" id="CHEBI:15361"/>
        <dbReference type="ChEBI" id="CHEBI:16651"/>
        <dbReference type="ChEBI" id="CHEBI:17499"/>
    </reaction>
</comment>
<comment type="cofactor">
    <cofactor evidence="1">
        <name>FMN</name>
        <dbReference type="ChEBI" id="CHEBI:58210"/>
    </cofactor>
</comment>
<comment type="subcellular location">
    <subcellularLocation>
        <location evidence="1">Cell inner membrane</location>
        <topology evidence="1">Peripheral membrane protein</topology>
    </subcellularLocation>
</comment>
<comment type="similarity">
    <text evidence="1">Belongs to the FMN-dependent alpha-hydroxy acid dehydrogenase family.</text>
</comment>
<sequence length="381" mass="41259">MIISASTDYRAAAQRKLPPFLFHYIDGGAYNEQTLRRNTADLADIALRQRVLKNMSELSLETQLFGETQAMPVVLGPVGLSGMYARRGEVQAARAADKKGIPFTLSTLSVCPIEEVAPAIARPMWFQLYVLKDRGFMRNALTRAQAAGVKTLVFTVDMPVPGARYRDAHSGMSGPNAAARRLLQAIAHPQWAWDVGLNGKPHDLGNISAYLGKPTTLEDYMGWIATNFDPSISWKDLEWVREFWQGPMIIKGILDPEDAKDAVKFGADGIVVSNHGGRQLDGVLSTARALPAIADAVKGDITILADSGIRTGLDVVRMIALGADSVLLGRAFVYALATAGEAGVINLLTLIEQEMRVAMTLTGAKRIADINRDSLAVSERG</sequence>
<organism>
    <name type="scientific">Yersinia pestis bv. Antiqua (strain Antiqua)</name>
    <dbReference type="NCBI Taxonomy" id="360102"/>
    <lineage>
        <taxon>Bacteria</taxon>
        <taxon>Pseudomonadati</taxon>
        <taxon>Pseudomonadota</taxon>
        <taxon>Gammaproteobacteria</taxon>
        <taxon>Enterobacterales</taxon>
        <taxon>Yersiniaceae</taxon>
        <taxon>Yersinia</taxon>
    </lineage>
</organism>
<dbReference type="EC" id="1.1.-.-" evidence="1"/>
<dbReference type="EMBL" id="CP000308">
    <property type="protein sequence ID" value="ABG12832.1"/>
    <property type="molecule type" value="Genomic_DNA"/>
</dbReference>
<dbReference type="RefSeq" id="WP_002211919.1">
    <property type="nucleotide sequence ID" value="NZ_CP009906.1"/>
</dbReference>
<dbReference type="SMR" id="Q1C9P0"/>
<dbReference type="GeneID" id="57977002"/>
<dbReference type="KEGG" id="ypa:YPA_0864"/>
<dbReference type="Proteomes" id="UP000001971">
    <property type="component" value="Chromosome"/>
</dbReference>
<dbReference type="GO" id="GO:0005886">
    <property type="term" value="C:plasma membrane"/>
    <property type="evidence" value="ECO:0007669"/>
    <property type="project" value="UniProtKB-SubCell"/>
</dbReference>
<dbReference type="GO" id="GO:0010181">
    <property type="term" value="F:FMN binding"/>
    <property type="evidence" value="ECO:0007669"/>
    <property type="project" value="InterPro"/>
</dbReference>
<dbReference type="GO" id="GO:0004459">
    <property type="term" value="F:L-lactate dehydrogenase activity"/>
    <property type="evidence" value="ECO:0007669"/>
    <property type="project" value="UniProtKB-UniRule"/>
</dbReference>
<dbReference type="GO" id="GO:0009060">
    <property type="term" value="P:aerobic respiration"/>
    <property type="evidence" value="ECO:0007669"/>
    <property type="project" value="TreeGrafter"/>
</dbReference>
<dbReference type="GO" id="GO:0006089">
    <property type="term" value="P:lactate metabolic process"/>
    <property type="evidence" value="ECO:0007669"/>
    <property type="project" value="UniProtKB-UniRule"/>
</dbReference>
<dbReference type="CDD" id="cd02809">
    <property type="entry name" value="alpha_hydroxyacid_oxid_FMN"/>
    <property type="match status" value="1"/>
</dbReference>
<dbReference type="FunFam" id="3.20.20.70:FF:000029">
    <property type="entry name" value="L-lactate dehydrogenase"/>
    <property type="match status" value="1"/>
</dbReference>
<dbReference type="Gene3D" id="3.20.20.70">
    <property type="entry name" value="Aldolase class I"/>
    <property type="match status" value="1"/>
</dbReference>
<dbReference type="HAMAP" id="MF_01559">
    <property type="entry name" value="L_lact_dehydr"/>
    <property type="match status" value="1"/>
</dbReference>
<dbReference type="InterPro" id="IPR013785">
    <property type="entry name" value="Aldolase_TIM"/>
</dbReference>
<dbReference type="InterPro" id="IPR012133">
    <property type="entry name" value="Alpha-hydoxy_acid_DH_FMN"/>
</dbReference>
<dbReference type="InterPro" id="IPR000262">
    <property type="entry name" value="FMN-dep_DH"/>
</dbReference>
<dbReference type="InterPro" id="IPR037396">
    <property type="entry name" value="FMN_HAD"/>
</dbReference>
<dbReference type="InterPro" id="IPR008259">
    <property type="entry name" value="FMN_hydac_DH_AS"/>
</dbReference>
<dbReference type="InterPro" id="IPR020920">
    <property type="entry name" value="LldD"/>
</dbReference>
<dbReference type="NCBIfam" id="NF033901">
    <property type="entry name" value="L_lactate_LldD"/>
    <property type="match status" value="1"/>
</dbReference>
<dbReference type="NCBIfam" id="NF008398">
    <property type="entry name" value="PRK11197.1"/>
    <property type="match status" value="1"/>
</dbReference>
<dbReference type="PANTHER" id="PTHR10578:SF85">
    <property type="entry name" value="L-LACTATE DEHYDROGENASE"/>
    <property type="match status" value="1"/>
</dbReference>
<dbReference type="PANTHER" id="PTHR10578">
    <property type="entry name" value="S -2-HYDROXY-ACID OXIDASE-RELATED"/>
    <property type="match status" value="1"/>
</dbReference>
<dbReference type="Pfam" id="PF01070">
    <property type="entry name" value="FMN_dh"/>
    <property type="match status" value="1"/>
</dbReference>
<dbReference type="PIRSF" id="PIRSF000138">
    <property type="entry name" value="Al-hdrx_acd_dh"/>
    <property type="match status" value="1"/>
</dbReference>
<dbReference type="SUPFAM" id="SSF51395">
    <property type="entry name" value="FMN-linked oxidoreductases"/>
    <property type="match status" value="1"/>
</dbReference>
<dbReference type="PROSITE" id="PS00557">
    <property type="entry name" value="FMN_HYDROXY_ACID_DH_1"/>
    <property type="match status" value="1"/>
</dbReference>
<dbReference type="PROSITE" id="PS51349">
    <property type="entry name" value="FMN_HYDROXY_ACID_DH_2"/>
    <property type="match status" value="1"/>
</dbReference>
<evidence type="ECO:0000255" key="1">
    <source>
        <dbReference type="HAMAP-Rule" id="MF_01559"/>
    </source>
</evidence>
<keyword id="KW-0997">Cell inner membrane</keyword>
<keyword id="KW-1003">Cell membrane</keyword>
<keyword id="KW-0285">Flavoprotein</keyword>
<keyword id="KW-0288">FMN</keyword>
<keyword id="KW-0472">Membrane</keyword>
<keyword id="KW-0560">Oxidoreductase</keyword>